<name>RL14_YERPS</name>
<dbReference type="EMBL" id="BX936398">
    <property type="protein sequence ID" value="CAH22926.1"/>
    <property type="molecule type" value="Genomic_DNA"/>
</dbReference>
<dbReference type="RefSeq" id="WP_002213325.1">
    <property type="nucleotide sequence ID" value="NZ_CP009712.1"/>
</dbReference>
<dbReference type="SMR" id="Q664T1"/>
<dbReference type="GeneID" id="97454241"/>
<dbReference type="KEGG" id="ypo:BZ17_2899"/>
<dbReference type="KEGG" id="yps:YPTB3688"/>
<dbReference type="PATRIC" id="fig|273123.14.peg.3040"/>
<dbReference type="Proteomes" id="UP000001011">
    <property type="component" value="Chromosome"/>
</dbReference>
<dbReference type="GO" id="GO:0022625">
    <property type="term" value="C:cytosolic large ribosomal subunit"/>
    <property type="evidence" value="ECO:0007669"/>
    <property type="project" value="TreeGrafter"/>
</dbReference>
<dbReference type="GO" id="GO:0070180">
    <property type="term" value="F:large ribosomal subunit rRNA binding"/>
    <property type="evidence" value="ECO:0007669"/>
    <property type="project" value="TreeGrafter"/>
</dbReference>
<dbReference type="GO" id="GO:0003735">
    <property type="term" value="F:structural constituent of ribosome"/>
    <property type="evidence" value="ECO:0007669"/>
    <property type="project" value="InterPro"/>
</dbReference>
<dbReference type="GO" id="GO:0006412">
    <property type="term" value="P:translation"/>
    <property type="evidence" value="ECO:0007669"/>
    <property type="project" value="UniProtKB-UniRule"/>
</dbReference>
<dbReference type="CDD" id="cd00337">
    <property type="entry name" value="Ribosomal_uL14"/>
    <property type="match status" value="1"/>
</dbReference>
<dbReference type="FunFam" id="2.40.150.20:FF:000001">
    <property type="entry name" value="50S ribosomal protein L14"/>
    <property type="match status" value="1"/>
</dbReference>
<dbReference type="Gene3D" id="2.40.150.20">
    <property type="entry name" value="Ribosomal protein L14"/>
    <property type="match status" value="1"/>
</dbReference>
<dbReference type="HAMAP" id="MF_01367">
    <property type="entry name" value="Ribosomal_uL14"/>
    <property type="match status" value="1"/>
</dbReference>
<dbReference type="InterPro" id="IPR000218">
    <property type="entry name" value="Ribosomal_uL14"/>
</dbReference>
<dbReference type="InterPro" id="IPR005745">
    <property type="entry name" value="Ribosomal_uL14_bac-type"/>
</dbReference>
<dbReference type="InterPro" id="IPR019972">
    <property type="entry name" value="Ribosomal_uL14_CS"/>
</dbReference>
<dbReference type="InterPro" id="IPR036853">
    <property type="entry name" value="Ribosomal_uL14_sf"/>
</dbReference>
<dbReference type="NCBIfam" id="TIGR01067">
    <property type="entry name" value="rplN_bact"/>
    <property type="match status" value="1"/>
</dbReference>
<dbReference type="PANTHER" id="PTHR11761">
    <property type="entry name" value="50S/60S RIBOSOMAL PROTEIN L14/L23"/>
    <property type="match status" value="1"/>
</dbReference>
<dbReference type="PANTHER" id="PTHR11761:SF3">
    <property type="entry name" value="LARGE RIBOSOMAL SUBUNIT PROTEIN UL14M"/>
    <property type="match status" value="1"/>
</dbReference>
<dbReference type="Pfam" id="PF00238">
    <property type="entry name" value="Ribosomal_L14"/>
    <property type="match status" value="1"/>
</dbReference>
<dbReference type="SMART" id="SM01374">
    <property type="entry name" value="Ribosomal_L14"/>
    <property type="match status" value="1"/>
</dbReference>
<dbReference type="SUPFAM" id="SSF50193">
    <property type="entry name" value="Ribosomal protein L14"/>
    <property type="match status" value="1"/>
</dbReference>
<dbReference type="PROSITE" id="PS00049">
    <property type="entry name" value="RIBOSOMAL_L14"/>
    <property type="match status" value="1"/>
</dbReference>
<gene>
    <name evidence="1" type="primary">rplN</name>
    <name type="ordered locus">YPTB3688</name>
</gene>
<organism>
    <name type="scientific">Yersinia pseudotuberculosis serotype I (strain IP32953)</name>
    <dbReference type="NCBI Taxonomy" id="273123"/>
    <lineage>
        <taxon>Bacteria</taxon>
        <taxon>Pseudomonadati</taxon>
        <taxon>Pseudomonadota</taxon>
        <taxon>Gammaproteobacteria</taxon>
        <taxon>Enterobacterales</taxon>
        <taxon>Yersiniaceae</taxon>
        <taxon>Yersinia</taxon>
    </lineage>
</organism>
<proteinExistence type="inferred from homology"/>
<evidence type="ECO:0000255" key="1">
    <source>
        <dbReference type="HAMAP-Rule" id="MF_01367"/>
    </source>
</evidence>
<evidence type="ECO:0000305" key="2"/>
<protein>
    <recommendedName>
        <fullName evidence="1">Large ribosomal subunit protein uL14</fullName>
    </recommendedName>
    <alternativeName>
        <fullName evidence="2">50S ribosomal protein L14</fullName>
    </alternativeName>
</protein>
<comment type="function">
    <text evidence="1">Binds to 23S rRNA. Forms part of two intersubunit bridges in the 70S ribosome.</text>
</comment>
<comment type="subunit">
    <text evidence="1">Part of the 50S ribosomal subunit. Forms a cluster with proteins L3 and L19. In the 70S ribosome, L14 and L19 interact and together make contacts with the 16S rRNA in bridges B5 and B8.</text>
</comment>
<comment type="similarity">
    <text evidence="1">Belongs to the universal ribosomal protein uL14 family.</text>
</comment>
<accession>Q664T1</accession>
<sequence length="123" mass="13582">MIQEQTMLNVADNSGARRVMCIKVLGGSHRRYAGIGDIIKITIKEAIPRGKVKKGDVLKAVVVRTKKGVRRPDGSVIRFDGNACVILNNNSEQPIGTRIFGPVTRELRNEKFMKIISLAPEVL</sequence>
<reference key="1">
    <citation type="journal article" date="2004" name="Proc. Natl. Acad. Sci. U.S.A.">
        <title>Insights into the evolution of Yersinia pestis through whole-genome comparison with Yersinia pseudotuberculosis.</title>
        <authorList>
            <person name="Chain P.S.G."/>
            <person name="Carniel E."/>
            <person name="Larimer F.W."/>
            <person name="Lamerdin J."/>
            <person name="Stoutland P.O."/>
            <person name="Regala W.M."/>
            <person name="Georgescu A.M."/>
            <person name="Vergez L.M."/>
            <person name="Land M.L."/>
            <person name="Motin V.L."/>
            <person name="Brubaker R.R."/>
            <person name="Fowler J."/>
            <person name="Hinnebusch J."/>
            <person name="Marceau M."/>
            <person name="Medigue C."/>
            <person name="Simonet M."/>
            <person name="Chenal-Francisque V."/>
            <person name="Souza B."/>
            <person name="Dacheux D."/>
            <person name="Elliott J.M."/>
            <person name="Derbise A."/>
            <person name="Hauser L.J."/>
            <person name="Garcia E."/>
        </authorList>
    </citation>
    <scope>NUCLEOTIDE SEQUENCE [LARGE SCALE GENOMIC DNA]</scope>
    <source>
        <strain>IP32953</strain>
    </source>
</reference>
<feature type="chain" id="PRO_0000266594" description="Large ribosomal subunit protein uL14">
    <location>
        <begin position="1"/>
        <end position="123"/>
    </location>
</feature>
<keyword id="KW-0687">Ribonucleoprotein</keyword>
<keyword id="KW-0689">Ribosomal protein</keyword>
<keyword id="KW-0694">RNA-binding</keyword>
<keyword id="KW-0699">rRNA-binding</keyword>